<accession>P0ABK9</accession>
<accession>P32050</accession>
<accession>Q2M6N4</accession>
<protein>
    <recommendedName>
        <fullName evidence="9">Cytochrome c-552</fullName>
        <ecNumber evidence="2 3 4 7">1.7.2.2</ecNumber>
    </recommendedName>
    <alternativeName>
        <fullName>Ammonia-forming cytochrome c nitrite reductase</fullName>
        <shortName evidence="8">Cytochrome c nitrite reductase</shortName>
    </alternativeName>
</protein>
<organism>
    <name type="scientific">Escherichia coli (strain K12)</name>
    <dbReference type="NCBI Taxonomy" id="83333"/>
    <lineage>
        <taxon>Bacteria</taxon>
        <taxon>Pseudomonadati</taxon>
        <taxon>Pseudomonadota</taxon>
        <taxon>Gammaproteobacteria</taxon>
        <taxon>Enterobacterales</taxon>
        <taxon>Enterobacteriaceae</taxon>
        <taxon>Escherichia</taxon>
    </lineage>
</organism>
<dbReference type="EC" id="1.7.2.2" evidence="2 3 4 7"/>
<dbReference type="EMBL" id="X72298">
    <property type="protein sequence ID" value="CAA51048.1"/>
    <property type="molecule type" value="Genomic_DNA"/>
</dbReference>
<dbReference type="EMBL" id="U00006">
    <property type="protein sequence ID" value="AAC43164.1"/>
    <property type="molecule type" value="Genomic_DNA"/>
</dbReference>
<dbReference type="EMBL" id="U00096">
    <property type="protein sequence ID" value="AAC77040.1"/>
    <property type="molecule type" value="Genomic_DNA"/>
</dbReference>
<dbReference type="EMBL" id="AP009048">
    <property type="protein sequence ID" value="BAE78072.1"/>
    <property type="molecule type" value="Genomic_DNA"/>
</dbReference>
<dbReference type="PIR" id="S39590">
    <property type="entry name" value="S39590"/>
</dbReference>
<dbReference type="RefSeq" id="NP_418494.1">
    <property type="nucleotide sequence ID" value="NC_000913.3"/>
</dbReference>
<dbReference type="RefSeq" id="WP_000196875.1">
    <property type="nucleotide sequence ID" value="NZ_STEB01000014.1"/>
</dbReference>
<dbReference type="PDB" id="1GU6">
    <property type="method" value="X-ray"/>
    <property type="resolution" value="2.50 A"/>
    <property type="chains" value="A/C/E/G=27-478"/>
</dbReference>
<dbReference type="PDB" id="2RDZ">
    <property type="method" value="X-ray"/>
    <property type="resolution" value="1.74 A"/>
    <property type="chains" value="A/B/C/D=27-478"/>
</dbReference>
<dbReference type="PDB" id="2RF7">
    <property type="method" value="X-ray"/>
    <property type="resolution" value="2.04 A"/>
    <property type="chains" value="A/B/C/D=37-477"/>
</dbReference>
<dbReference type="PDB" id="3L1T">
    <property type="method" value="X-ray"/>
    <property type="resolution" value="2.30 A"/>
    <property type="chains" value="A/B/C/D=27-478"/>
</dbReference>
<dbReference type="PDB" id="3TOR">
    <property type="method" value="X-ray"/>
    <property type="resolution" value="2.00 A"/>
    <property type="chains" value="A/B/C/D=27-478"/>
</dbReference>
<dbReference type="PDB" id="4WJY">
    <property type="method" value="X-ray"/>
    <property type="resolution" value="2.15 A"/>
    <property type="chains" value="A/B=27-478"/>
</dbReference>
<dbReference type="PDBsum" id="1GU6"/>
<dbReference type="PDBsum" id="2RDZ"/>
<dbReference type="PDBsum" id="2RF7"/>
<dbReference type="PDBsum" id="3L1T"/>
<dbReference type="PDBsum" id="3TOR"/>
<dbReference type="PDBsum" id="4WJY"/>
<dbReference type="SMR" id="P0ABK9"/>
<dbReference type="BioGRID" id="4259405">
    <property type="interactions" value="30"/>
</dbReference>
<dbReference type="DIP" id="DIP-36021N"/>
<dbReference type="FunCoup" id="P0ABK9">
    <property type="interactions" value="69"/>
</dbReference>
<dbReference type="IntAct" id="P0ABK9">
    <property type="interactions" value="3"/>
</dbReference>
<dbReference type="STRING" id="511145.b4070"/>
<dbReference type="DrugBank" id="DB03317">
    <property type="generic name" value="Ferroheme C"/>
</dbReference>
<dbReference type="TCDB" id="5.A.3.5.3">
    <property type="family name" value="the prokaryotic molybdopterin-containing oxidoreductase (pmo) family"/>
</dbReference>
<dbReference type="jPOST" id="P0ABK9"/>
<dbReference type="PaxDb" id="511145-b4070"/>
<dbReference type="EnsemblBacteria" id="AAC77040">
    <property type="protein sequence ID" value="AAC77040"/>
    <property type="gene ID" value="b4070"/>
</dbReference>
<dbReference type="GeneID" id="93777759"/>
<dbReference type="GeneID" id="948571"/>
<dbReference type="KEGG" id="ecj:JW4031"/>
<dbReference type="KEGG" id="eco:b4070"/>
<dbReference type="KEGG" id="ecoc:C3026_22000"/>
<dbReference type="PATRIC" id="fig|1411691.4.peg.2634"/>
<dbReference type="EchoBASE" id="EB1729"/>
<dbReference type="eggNOG" id="COG3303">
    <property type="taxonomic scope" value="Bacteria"/>
</dbReference>
<dbReference type="HOGENOM" id="CLU_035040_1_0_6"/>
<dbReference type="InParanoid" id="P0ABK9"/>
<dbReference type="OMA" id="INRACQT"/>
<dbReference type="OrthoDB" id="9780421at2"/>
<dbReference type="PhylomeDB" id="P0ABK9"/>
<dbReference type="BioCyc" id="EcoCyc:CYTOCHROMEC552-MONOMER"/>
<dbReference type="BioCyc" id="MetaCyc:CYTOCHROMEC552-MONOMER"/>
<dbReference type="BRENDA" id="1.7.2.2">
    <property type="organism ID" value="2026"/>
</dbReference>
<dbReference type="SABIO-RK" id="P0ABK9"/>
<dbReference type="UniPathway" id="UPA00653"/>
<dbReference type="EvolutionaryTrace" id="P0ABK9"/>
<dbReference type="PRO" id="PR:P0ABK9"/>
<dbReference type="Proteomes" id="UP000000625">
    <property type="component" value="Chromosome"/>
</dbReference>
<dbReference type="GO" id="GO:0030288">
    <property type="term" value="C:outer membrane-bounded periplasmic space"/>
    <property type="evidence" value="ECO:0000314"/>
    <property type="project" value="EcoCyc"/>
</dbReference>
<dbReference type="GO" id="GO:0005509">
    <property type="term" value="F:calcium ion binding"/>
    <property type="evidence" value="ECO:0007669"/>
    <property type="project" value="UniProtKB-UniRule"/>
</dbReference>
<dbReference type="GO" id="GO:0020037">
    <property type="term" value="F:heme binding"/>
    <property type="evidence" value="ECO:0000314"/>
    <property type="project" value="EcoCyc"/>
</dbReference>
<dbReference type="GO" id="GO:0005506">
    <property type="term" value="F:iron ion binding"/>
    <property type="evidence" value="ECO:0007669"/>
    <property type="project" value="UniProtKB-UniRule"/>
</dbReference>
<dbReference type="GO" id="GO:0016966">
    <property type="term" value="F:nitric oxide reductase activity"/>
    <property type="evidence" value="ECO:0000314"/>
    <property type="project" value="CACAO"/>
</dbReference>
<dbReference type="GO" id="GO:0042279">
    <property type="term" value="F:nitrite reductase (cytochrome, ammonia-forming) activity"/>
    <property type="evidence" value="ECO:0000314"/>
    <property type="project" value="EcoCyc"/>
</dbReference>
<dbReference type="GO" id="GO:0019645">
    <property type="term" value="P:anaerobic electron transport chain"/>
    <property type="evidence" value="ECO:0000315"/>
    <property type="project" value="EcoCyc"/>
</dbReference>
<dbReference type="GO" id="GO:0042128">
    <property type="term" value="P:nitrate assimilation"/>
    <property type="evidence" value="ECO:0007669"/>
    <property type="project" value="UniProtKB-UniRule"/>
</dbReference>
<dbReference type="CDD" id="cd00548">
    <property type="entry name" value="NrfA-like"/>
    <property type="match status" value="1"/>
</dbReference>
<dbReference type="FunFam" id="1.10.1130.10:FF:000002">
    <property type="entry name" value="Cytochrome c-552"/>
    <property type="match status" value="1"/>
</dbReference>
<dbReference type="FunFam" id="1.20.140.10:FF:000014">
    <property type="entry name" value="Cytochrome c-552"/>
    <property type="match status" value="1"/>
</dbReference>
<dbReference type="Gene3D" id="1.20.140.10">
    <property type="entry name" value="Butyryl-CoA Dehydrogenase, subunit A, domain 3"/>
    <property type="match status" value="1"/>
</dbReference>
<dbReference type="Gene3D" id="1.10.1130.10">
    <property type="entry name" value="Flavocytochrome C3, Chain A"/>
    <property type="match status" value="1"/>
</dbReference>
<dbReference type="HAMAP" id="MF_01182">
    <property type="entry name" value="Cytochrom_C552"/>
    <property type="match status" value="1"/>
</dbReference>
<dbReference type="InterPro" id="IPR003321">
    <property type="entry name" value="Cyt_c552"/>
</dbReference>
<dbReference type="InterPro" id="IPR017570">
    <property type="entry name" value="Cyt_c_NO2Rdtase_formate-dep"/>
</dbReference>
<dbReference type="InterPro" id="IPR036280">
    <property type="entry name" value="Multihaem_cyt_sf"/>
</dbReference>
<dbReference type="NCBIfam" id="TIGR03152">
    <property type="entry name" value="cyto_c552_HCOOH"/>
    <property type="match status" value="1"/>
</dbReference>
<dbReference type="NCBIfam" id="NF008339">
    <property type="entry name" value="PRK11125.1"/>
    <property type="match status" value="1"/>
</dbReference>
<dbReference type="PANTHER" id="PTHR30633:SF0">
    <property type="entry name" value="CYTOCHROME C-552"/>
    <property type="match status" value="1"/>
</dbReference>
<dbReference type="PANTHER" id="PTHR30633">
    <property type="entry name" value="CYTOCHROME C-552 RESPIRATORY NITRITE REDUCTASE"/>
    <property type="match status" value="1"/>
</dbReference>
<dbReference type="Pfam" id="PF02335">
    <property type="entry name" value="Cytochrom_C552"/>
    <property type="match status" value="1"/>
</dbReference>
<dbReference type="PIRSF" id="PIRSF000243">
    <property type="entry name" value="Cyt_c552"/>
    <property type="match status" value="1"/>
</dbReference>
<dbReference type="SUPFAM" id="SSF48695">
    <property type="entry name" value="Multiheme cytochromes"/>
    <property type="match status" value="1"/>
</dbReference>
<dbReference type="PROSITE" id="PS51008">
    <property type="entry name" value="MULTIHEME_CYTC"/>
    <property type="match status" value="1"/>
</dbReference>
<proteinExistence type="evidence at protein level"/>
<comment type="function">
    <text evidence="1 2 3 4 7 11">Catalyzes the reduction of nitrite to ammonia, consuming six electrons in the process (PubMed:11863430, PubMed:18311941, PubMed:20629638, PubMed:9593308). Has very low activity toward hydroxylamine (PubMed:11863430). Has even lower activity toward sulfite (PubMed:20629638). Sulfite reductase activity is maximal at neutral pH (By similarity).</text>
</comment>
<comment type="catalytic activity">
    <reaction evidence="2 3 4 7">
        <text>6 Fe(III)-[cytochrome c] + NH4(+) + 2 H2O = 6 Fe(II)-[cytochrome c] + nitrite + 8 H(+)</text>
        <dbReference type="Rhea" id="RHEA:13089"/>
        <dbReference type="Rhea" id="RHEA-COMP:10350"/>
        <dbReference type="Rhea" id="RHEA-COMP:14399"/>
        <dbReference type="ChEBI" id="CHEBI:15377"/>
        <dbReference type="ChEBI" id="CHEBI:15378"/>
        <dbReference type="ChEBI" id="CHEBI:16301"/>
        <dbReference type="ChEBI" id="CHEBI:28938"/>
        <dbReference type="ChEBI" id="CHEBI:29033"/>
        <dbReference type="ChEBI" id="CHEBI:29034"/>
        <dbReference type="EC" id="1.7.2.2"/>
    </reaction>
</comment>
<comment type="cofactor">
    <cofactor evidence="2 3 4 5">
        <name>Ca(2+)</name>
        <dbReference type="ChEBI" id="CHEBI:29108"/>
    </cofactor>
    <text evidence="2 3 4 5">Binds 1 Ca(2+) ion per monomer.</text>
</comment>
<comment type="cofactor">
    <cofactor evidence="2 3 4 5 6 7">
        <name>heme c</name>
        <dbReference type="ChEBI" id="CHEBI:61717"/>
    </cofactor>
    <text evidence="2 3 4 5">Binds 5 heme c groups covalently per monomer.</text>
</comment>
<comment type="activity regulation">
    <text evidence="4">Subject to competitive inhibition by sulfite.</text>
</comment>
<comment type="biophysicochemical properties">
    <kinetics>
        <KM evidence="2">28 uM for nitrite</KM>
        <KM evidence="3">30 uM for nitrite</KM>
        <KM evidence="4">22 uM for nitrite</KM>
        <KM evidence="4">70 uM for sulfite</KM>
        <KM evidence="2">30 mM for hydroxylamine</KM>
    </kinetics>
</comment>
<comment type="pathway">
    <text evidence="11">Nitrogen metabolism; nitrate reduction (assimilation).</text>
</comment>
<comment type="subunit">
    <text evidence="2 3 10">Homodimer (PubMed:11863430, PubMed:18311941). Component of a membrane-associated heterooligomeric complex (Probable).</text>
</comment>
<comment type="subcellular location">
    <subcellularLocation>
        <location evidence="2 6 7">Periplasm</location>
    </subcellularLocation>
</comment>
<comment type="induction">
    <text evidence="6">Full induction attained in the presence of nitrite. Subject to glucose and nitrate repression.</text>
</comment>
<comment type="mass spectrometry"/>
<comment type="similarity">
    <text evidence="10">Belongs to the cytochrome c-552 family.</text>
</comment>
<evidence type="ECO:0000250" key="1">
    <source>
        <dbReference type="UniProtKB" id="L0DSL2"/>
    </source>
</evidence>
<evidence type="ECO:0000269" key="2">
    <source>
    </source>
</evidence>
<evidence type="ECO:0000269" key="3">
    <source>
    </source>
</evidence>
<evidence type="ECO:0000269" key="4">
    <source>
    </source>
</evidence>
<evidence type="ECO:0000269" key="5">
    <source>
    </source>
</evidence>
<evidence type="ECO:0000269" key="6">
    <source>
    </source>
</evidence>
<evidence type="ECO:0000269" key="7">
    <source>
    </source>
</evidence>
<evidence type="ECO:0000303" key="8">
    <source>
    </source>
</evidence>
<evidence type="ECO:0000303" key="9">
    <source>
    </source>
</evidence>
<evidence type="ECO:0000305" key="10"/>
<evidence type="ECO:0000305" key="11">
    <source>
    </source>
</evidence>
<evidence type="ECO:0007744" key="12">
    <source>
        <dbReference type="PDB" id="1GU6"/>
    </source>
</evidence>
<evidence type="ECO:0007744" key="13">
    <source>
        <dbReference type="PDB" id="2RDZ"/>
    </source>
</evidence>
<evidence type="ECO:0007744" key="14">
    <source>
        <dbReference type="PDB" id="2RF7"/>
    </source>
</evidence>
<evidence type="ECO:0007744" key="15">
    <source>
        <dbReference type="PDB" id="3L1T"/>
    </source>
</evidence>
<evidence type="ECO:0007744" key="16">
    <source>
        <dbReference type="PDB" id="3TOR"/>
    </source>
</evidence>
<evidence type="ECO:0007829" key="17">
    <source>
        <dbReference type="PDB" id="2RDZ"/>
    </source>
</evidence>
<keyword id="KW-0002">3D-structure</keyword>
<keyword id="KW-0106">Calcium</keyword>
<keyword id="KW-0903">Direct protein sequencing</keyword>
<keyword id="KW-0249">Electron transport</keyword>
<keyword id="KW-0349">Heme</keyword>
<keyword id="KW-0408">Iron</keyword>
<keyword id="KW-0479">Metal-binding</keyword>
<keyword id="KW-0560">Oxidoreductase</keyword>
<keyword id="KW-0574">Periplasm</keyword>
<keyword id="KW-1185">Reference proteome</keyword>
<keyword id="KW-0732">Signal</keyword>
<keyword id="KW-0813">Transport</keyword>
<reference key="1">
    <citation type="journal article" date="1993" name="Mol. Microbiol.">
        <title>Regulation and sequence of the structural gene for cytochrome c552 from Escherichia coli: not a hexahaem but a 50 kDa tetrahaem nitrite reductase.</title>
        <authorList>
            <person name="Darwin A."/>
            <person name="Hussain H.A."/>
            <person name="Griffiths L."/>
            <person name="Grove J."/>
            <person name="Sambongi Y."/>
            <person name="Busby S."/>
            <person name="Cole J."/>
        </authorList>
    </citation>
    <scope>NUCLEOTIDE SEQUENCE [GENOMIC DNA]</scope>
    <scope>PROTEIN SEQUENCE OF 27-42 AND 150-167</scope>
    <scope>FUNCTION</scope>
    <scope>SUBCELLULAR LOCATION</scope>
    <scope>COFACTOR</scope>
    <scope>INDUCTION</scope>
    <source>
        <strain>K12</strain>
    </source>
</reference>
<reference key="2">
    <citation type="journal article" date="1993" name="Nucleic Acids Res.">
        <title>Analysis of the Escherichia coli genome. IV. DNA sequence of the region from 89.2 to 92.8 minutes.</title>
        <authorList>
            <person name="Blattner F.R."/>
            <person name="Burland V.D."/>
            <person name="Plunkett G. III"/>
            <person name="Sofia H.J."/>
            <person name="Daniels D.L."/>
        </authorList>
    </citation>
    <scope>NUCLEOTIDE SEQUENCE [LARGE SCALE GENOMIC DNA]</scope>
    <source>
        <strain>K12 / MG1655 / ATCC 47076</strain>
    </source>
</reference>
<reference key="3">
    <citation type="journal article" date="1997" name="Science">
        <title>The complete genome sequence of Escherichia coli K-12.</title>
        <authorList>
            <person name="Blattner F.R."/>
            <person name="Plunkett G. III"/>
            <person name="Bloch C.A."/>
            <person name="Perna N.T."/>
            <person name="Burland V."/>
            <person name="Riley M."/>
            <person name="Collado-Vides J."/>
            <person name="Glasner J.D."/>
            <person name="Rode C.K."/>
            <person name="Mayhew G.F."/>
            <person name="Gregor J."/>
            <person name="Davis N.W."/>
            <person name="Kirkpatrick H.A."/>
            <person name="Goeden M.A."/>
            <person name="Rose D.J."/>
            <person name="Mau B."/>
            <person name="Shao Y."/>
        </authorList>
    </citation>
    <scope>NUCLEOTIDE SEQUENCE [LARGE SCALE GENOMIC DNA]</scope>
    <source>
        <strain>K12 / MG1655 / ATCC 47076</strain>
    </source>
</reference>
<reference key="4">
    <citation type="journal article" date="2006" name="Mol. Syst. Biol.">
        <title>Highly accurate genome sequences of Escherichia coli K-12 strains MG1655 and W3110.</title>
        <authorList>
            <person name="Hayashi K."/>
            <person name="Morooka N."/>
            <person name="Yamamoto Y."/>
            <person name="Fujita K."/>
            <person name="Isono K."/>
            <person name="Choi S."/>
            <person name="Ohtsubo E."/>
            <person name="Baba T."/>
            <person name="Wanner B.L."/>
            <person name="Mori H."/>
            <person name="Horiuchi T."/>
        </authorList>
    </citation>
    <scope>NUCLEOTIDE SEQUENCE [LARGE SCALE GENOMIC DNA]</scope>
    <source>
        <strain>K12 / W3110 / ATCC 27325 / DSM 5911</strain>
    </source>
</reference>
<reference key="5">
    <citation type="journal article" date="1994" name="FEMS Microbiol. Lett.">
        <title>A reassessment of the range of c-type cytochromes synthesized by Escherichia coli K-12.</title>
        <authorList>
            <person name="Iobbi-Nivol C."/>
            <person name="Crooke H."/>
            <person name="Griffiths L."/>
            <person name="Grov J."/>
            <person name="Hussain H."/>
            <person name="Pommier J."/>
            <person name="Mejean V."/>
            <person name="Cole J.A."/>
        </authorList>
    </citation>
    <scope>CHARACTERIZATION AS A CYTOCHROME C</scope>
</reference>
<reference key="6">
    <citation type="journal article" date="1998" name="Mol. Microbiol.">
        <title>Involvement of products of the nrfEFG genes in the covalent attachment of haem c to a novel cysteine-lysine motif in the cytochrome c552 nitrite reductase from Escherichia coli.</title>
        <authorList>
            <person name="Eaves D.J."/>
            <person name="Grove J."/>
            <person name="Staudenmann W."/>
            <person name="James P."/>
            <person name="Poole R.K."/>
            <person name="White S.A."/>
            <person name="Griffiths I."/>
            <person name="Cole J.A."/>
        </authorList>
    </citation>
    <scope>FUNCTION</scope>
    <scope>CATALYTIC ACTIVITY</scope>
    <scope>HEME-BINDING</scope>
    <scope>COFACTOR</scope>
    <scope>SUBCELLULAR LOCATION</scope>
    <scope>MASS SPECTROMETRY</scope>
    <scope>MUTAGENESIS OF LYS-126</scope>
    <source>
        <strain>K12 / JCB7120</strain>
    </source>
</reference>
<reference key="7">
    <citation type="journal article" date="2002" name="Biochemistry">
        <title>Structure and spectroscopy of the periplasmic cytochrome c nitrite reductase from Escherichia coli.</title>
        <authorList>
            <person name="Bamford V.A."/>
            <person name="Angove H.C."/>
            <person name="Seward H.E."/>
            <person name="Thomson A.J."/>
            <person name="Cole J.A."/>
            <person name="Butt J.N."/>
            <person name="Hemmings A.M."/>
            <person name="Richardson D.J."/>
        </authorList>
    </citation>
    <scope>X-RAY CRYSTALLOGRAPHY (2.5 ANGSTROMS) IN COMPLEX WITH CALCIUM AND HEME</scope>
    <scope>CATALYTIC ACTIVITY</scope>
    <scope>BIOPHYSICOCHEMICAL PROPERTIES</scope>
    <scope>COFACTOR</scope>
    <scope>SUBCELLULAR LOCATION</scope>
    <scope>MAGNETIC CIRCULAR DICHROISM</scope>
    <scope>EPR SPECTROSCOPY</scope>
</reference>
<reference evidence="13 14" key="8">
    <citation type="journal article" date="2008" name="Biochemistry">
        <title>Role of a conserved glutamine residue in tuning the catalytic activity of Escherichia coli cytochrome c nitrite reductase.</title>
        <authorList>
            <person name="Clarke T.A."/>
            <person name="Kemp G.L."/>
            <person name="Van Wonderen J.H."/>
            <person name="Doyle R.M."/>
            <person name="Cole J.A."/>
            <person name="Tovell N."/>
            <person name="Cheesman M.R."/>
            <person name="Butt J.N."/>
            <person name="Richardson D.J."/>
            <person name="Hemmings A.M."/>
        </authorList>
    </citation>
    <scope>X-RAY CRYSTALLOGRAPHY (1.74 ANGSTROMS) OF 27-478 IN COMPLEX WITH CALCIUM AND HEME</scope>
    <scope>CATALYTIC ACTIVITY</scope>
    <scope>COFACTOR</scope>
    <scope>MUTAGENESIS OF GLN-263</scope>
</reference>
<reference evidence="15" key="9">
    <citation type="journal article" date="2010" name="Biochem. J.">
        <title>Kinetic and thermodynamic resolution of the interactions between sulfite and the pentahaem cytochrome NrfA from Escherichia coli.</title>
        <authorList>
            <person name="Kemp G.L."/>
            <person name="Clarke T.A."/>
            <person name="Marritt S.J."/>
            <person name="Lockwood C."/>
            <person name="Poock S.R."/>
            <person name="Hemmings A.M."/>
            <person name="Richardson D.J."/>
            <person name="Cheesman M.R."/>
            <person name="Butt J.N."/>
        </authorList>
    </citation>
    <scope>X-RAY CRYSTALLOGRAPHY (2.30 ANGSTROMS) OF 27-478 IN COMPLEX WITH CALCIUM; HEME AND HYDROGENSULFITE</scope>
    <scope>CATALYTIC ACTIVITY</scope>
    <scope>FUNCTION</scope>
    <scope>BIOPHYSICOCHEMICAL PROPERTIES</scope>
    <scope>ACTIVITY REGULATION</scope>
    <scope>COFACTOR</scope>
</reference>
<reference evidence="16" key="10">
    <citation type="journal article" date="2011" name="Biochem. Soc. Trans.">
        <title>Characterization of the active site and calcium binding in cytochrome c nitrite reductases.</title>
        <authorList>
            <person name="Lockwood C.W."/>
            <person name="Clarke T.A."/>
            <person name="Butt J.N."/>
            <person name="Hemmings A.M."/>
            <person name="Richardson D.J."/>
        </authorList>
    </citation>
    <scope>X-RAY CRYSTALLOGRAPHY (2.00 ANGSTROMS) OF 27-478 IN COMPLEX WITH CALCIUM AND HEME</scope>
    <scope>COFACTOR</scope>
</reference>
<gene>
    <name type="primary">nrfA</name>
    <name type="ordered locus">b4070</name>
    <name type="ordered locus">JW4031</name>
</gene>
<sequence>MTRIKINARRIFSLLIPFFFFTSVHAEQTAAPAKPVTVEAKNETFAPQHPDQYLSWKATSEQSERVDALAEDPRLVILWAGYPFSRDYNKPRGHAFAVTDVRETLRTGAPKNAEDGPLPMACWSCKSPDVARLIQKDGEDGYFHGKWARGGPEIVNNLGCADCHNTASPEFAKGKPELTLSRPYAARAMEAIGKPFEKAGRFDQQSMVCGQCHVEYYFDGKNKAVKFPWDDGMKVENMEQYYDKIAFSDWTNSLSKTPMLKAQHPEYETWTAGIHGKNNVTCIDCHMPKVQNAEGKLYTDHKIGNPFDNFAQTCANCHTQDKAALQKVVAERKQSINDLKIKVEDQLVHAHFEAKAALDAGATEAEMKPIQDDIRHAQWRWDLAIASHGIHMHAPEEGLRMLGTAMDKAADARTKLARLLATKGITHEIQIPDISTKEKAQQAIGLNMEQIKAEKQDFIKTVIPQWEEQARKNGLLSQ</sequence>
<name>NRFA_ECOLI</name>
<feature type="signal peptide" evidence="6">
    <location>
        <begin position="1"/>
        <end position="26"/>
    </location>
</feature>
<feature type="chain" id="PRO_0000006578" description="Cytochrome c-552">
    <location>
        <begin position="27"/>
        <end position="478"/>
    </location>
</feature>
<feature type="binding site" description="axial binding residue" evidence="12 13 14 15 16">
    <location>
        <position position="94"/>
    </location>
    <ligand>
        <name>heme c</name>
        <dbReference type="ChEBI" id="CHEBI:61717"/>
        <label>3</label>
    </ligand>
    <ligandPart>
        <name>Fe</name>
        <dbReference type="ChEBI" id="CHEBI:18248"/>
    </ligandPart>
</feature>
<feature type="binding site" description="covalent" evidence="12 13 14 15 16">
    <location>
        <position position="122"/>
    </location>
    <ligand>
        <name>heme c</name>
        <dbReference type="ChEBI" id="CHEBI:61717"/>
        <label>1</label>
    </ligand>
</feature>
<feature type="binding site" description="covalent" evidence="12 13 14 15 16">
    <location>
        <position position="125"/>
    </location>
    <ligand>
        <name>heme c</name>
        <dbReference type="ChEBI" id="CHEBI:61717"/>
        <label>1</label>
    </ligand>
</feature>
<feature type="binding site" description="axial binding residue" evidence="12 13 14 15 16">
    <location>
        <position position="126"/>
    </location>
    <ligand>
        <name>heme c</name>
        <dbReference type="ChEBI" id="CHEBI:61717"/>
        <label>1</label>
    </ligand>
    <ligandPart>
        <name>Fe</name>
        <dbReference type="ChEBI" id="CHEBI:18248"/>
    </ligandPart>
</feature>
<feature type="binding site" description="covalent" evidence="12 13 14 15 16">
    <location>
        <position position="160"/>
    </location>
    <ligand>
        <name>heme c</name>
        <dbReference type="ChEBI" id="CHEBI:61717"/>
        <label>2</label>
    </ligand>
</feature>
<feature type="binding site" description="covalent" evidence="12 13 14 15 16">
    <location>
        <position position="163"/>
    </location>
    <ligand>
        <name>heme c</name>
        <dbReference type="ChEBI" id="CHEBI:61717"/>
        <label>2</label>
    </ligand>
</feature>
<feature type="binding site" description="axial binding residue" evidence="12 13 14 15 16">
    <location>
        <position position="164"/>
    </location>
    <ligand>
        <name>heme c</name>
        <dbReference type="ChEBI" id="CHEBI:61717"/>
        <label>2</label>
    </ligand>
    <ligandPart>
        <name>Fe</name>
        <dbReference type="ChEBI" id="CHEBI:18248"/>
    </ligandPart>
</feature>
<feature type="binding site" description="covalent" evidence="12 13 14 15 16">
    <location>
        <position position="209"/>
    </location>
    <ligand>
        <name>heme c</name>
        <dbReference type="ChEBI" id="CHEBI:61717"/>
        <label>3</label>
    </ligand>
</feature>
<feature type="binding site" description="covalent" evidence="12 13 14 15 16">
    <location>
        <position position="212"/>
    </location>
    <ligand>
        <name>heme c</name>
        <dbReference type="ChEBI" id="CHEBI:61717"/>
        <label>3</label>
    </ligand>
</feature>
<feature type="binding site" description="axial binding residue" evidence="12 13 14 15 16">
    <location>
        <position position="213"/>
    </location>
    <ligand>
        <name>heme c</name>
        <dbReference type="ChEBI" id="CHEBI:61717"/>
        <label>3</label>
    </ligand>
    <ligandPart>
        <name>Fe</name>
        <dbReference type="ChEBI" id="CHEBI:18248"/>
    </ligandPart>
</feature>
<feature type="binding site" evidence="12 13 14 15 16">
    <location>
        <position position="215"/>
    </location>
    <ligand>
        <name>Ca(2+)</name>
        <dbReference type="ChEBI" id="CHEBI:29108"/>
    </ligand>
</feature>
<feature type="binding site" evidence="12 13 14 15 16">
    <location>
        <position position="216"/>
    </location>
    <ligand>
        <name>Ca(2+)</name>
        <dbReference type="ChEBI" id="CHEBI:29108"/>
    </ligand>
</feature>
<feature type="binding site" evidence="10">
    <location>
        <position position="216"/>
    </location>
    <ligand>
        <name>substrate</name>
    </ligand>
</feature>
<feature type="binding site" evidence="12 13 14 15 16">
    <location>
        <position position="261"/>
    </location>
    <ligand>
        <name>Ca(2+)</name>
        <dbReference type="ChEBI" id="CHEBI:29108"/>
    </ligand>
</feature>
<feature type="binding site" evidence="12 13 15 16">
    <location>
        <position position="263"/>
    </location>
    <ligand>
        <name>Ca(2+)</name>
        <dbReference type="ChEBI" id="CHEBI:29108"/>
    </ligand>
</feature>
<feature type="binding site" evidence="10">
    <location>
        <position position="264"/>
    </location>
    <ligand>
        <name>substrate</name>
    </ligand>
</feature>
<feature type="binding site" description="axial binding residue" evidence="12 13 14 15 16">
    <location>
        <position position="275"/>
    </location>
    <ligand>
        <name>heme c</name>
        <dbReference type="ChEBI" id="CHEBI:61717"/>
        <label>5</label>
    </ligand>
    <ligandPart>
        <name>Fe</name>
        <dbReference type="ChEBI" id="CHEBI:18248"/>
    </ligandPart>
</feature>
<feature type="binding site" description="covalent" evidence="12 13 14 15 16">
    <location>
        <position position="282"/>
    </location>
    <ligand>
        <name>heme c</name>
        <dbReference type="ChEBI" id="CHEBI:61717"/>
        <label>4</label>
    </ligand>
</feature>
<feature type="binding site" description="covalent" evidence="12 13 14">
    <location>
        <position position="285"/>
    </location>
    <ligand>
        <name>heme c</name>
        <dbReference type="ChEBI" id="CHEBI:61717"/>
        <label>4</label>
    </ligand>
</feature>
<feature type="binding site" description="axial binding residue" evidence="12 13 14 15 16">
    <location>
        <position position="286"/>
    </location>
    <ligand>
        <name>heme c</name>
        <dbReference type="ChEBI" id="CHEBI:61717"/>
        <label>4</label>
    </ligand>
    <ligandPart>
        <name>Fe</name>
        <dbReference type="ChEBI" id="CHEBI:18248"/>
    </ligandPart>
</feature>
<feature type="binding site" description="axial binding residue" evidence="12 13 14 15 16">
    <location>
        <position position="301"/>
    </location>
    <ligand>
        <name>heme c</name>
        <dbReference type="ChEBI" id="CHEBI:61717"/>
        <label>2</label>
    </ligand>
    <ligandPart>
        <name>Fe</name>
        <dbReference type="ChEBI" id="CHEBI:18248"/>
    </ligandPart>
</feature>
<feature type="binding site" description="covalent" evidence="12 13 14 15 16">
    <location>
        <position position="314"/>
    </location>
    <ligand>
        <name>heme c</name>
        <dbReference type="ChEBI" id="CHEBI:61717"/>
        <label>5</label>
    </ligand>
</feature>
<feature type="binding site" description="covalent" evidence="12 13 14">
    <location>
        <position position="317"/>
    </location>
    <ligand>
        <name>heme c</name>
        <dbReference type="ChEBI" id="CHEBI:61717"/>
        <label>5</label>
    </ligand>
</feature>
<feature type="binding site" description="axial binding residue" evidence="12 13 14 15 16">
    <location>
        <position position="318"/>
    </location>
    <ligand>
        <name>heme c</name>
        <dbReference type="ChEBI" id="CHEBI:61717"/>
        <label>5</label>
    </ligand>
    <ligandPart>
        <name>Fe</name>
        <dbReference type="ChEBI" id="CHEBI:18248"/>
    </ligandPart>
</feature>
<feature type="binding site" description="axial binding residue" evidence="12 13 14 15 16">
    <location>
        <position position="393"/>
    </location>
    <ligand>
        <name>heme c</name>
        <dbReference type="ChEBI" id="CHEBI:61717"/>
        <label>4</label>
    </ligand>
    <ligandPart>
        <name>Fe</name>
        <dbReference type="ChEBI" id="CHEBI:18248"/>
    </ligandPart>
</feature>
<feature type="mutagenesis site" description="Almost complete loss of nitrite reductase activity." evidence="7">
    <original>K</original>
    <variation>H</variation>
    <variation>I</variation>
    <variation>L</variation>
    <location>
        <position position="126"/>
    </location>
</feature>
<feature type="mutagenesis site" description="Increases affinity for nitrite without changing Vmax." evidence="3">
    <original>Q</original>
    <variation>E</variation>
    <location>
        <position position="263"/>
    </location>
</feature>
<feature type="helix" evidence="17">
    <location>
        <begin position="42"/>
        <end position="45"/>
    </location>
</feature>
<feature type="turn" evidence="17">
    <location>
        <begin position="46"/>
        <end position="48"/>
    </location>
</feature>
<feature type="helix" evidence="17">
    <location>
        <begin position="50"/>
        <end position="57"/>
    </location>
</feature>
<feature type="helix" evidence="17">
    <location>
        <begin position="58"/>
        <end position="61"/>
    </location>
</feature>
<feature type="helix" evidence="17">
    <location>
        <begin position="68"/>
        <end position="71"/>
    </location>
</feature>
<feature type="helix" evidence="17">
    <location>
        <begin position="74"/>
        <end position="78"/>
    </location>
</feature>
<feature type="turn" evidence="17">
    <location>
        <begin position="79"/>
        <end position="81"/>
    </location>
</feature>
<feature type="helix" evidence="17">
    <location>
        <begin position="83"/>
        <end position="85"/>
    </location>
</feature>
<feature type="helix" evidence="17">
    <location>
        <begin position="94"/>
        <end position="96"/>
    </location>
</feature>
<feature type="helix" evidence="17">
    <location>
        <begin position="97"/>
        <end position="103"/>
    </location>
</feature>
<feature type="helix" evidence="17">
    <location>
        <begin position="105"/>
        <end position="107"/>
    </location>
</feature>
<feature type="strand" evidence="17">
    <location>
        <begin position="116"/>
        <end position="119"/>
    </location>
</feature>
<feature type="helix" evidence="17">
    <location>
        <begin position="120"/>
        <end position="123"/>
    </location>
</feature>
<feature type="turn" evidence="17">
    <location>
        <begin position="124"/>
        <end position="126"/>
    </location>
</feature>
<feature type="helix" evidence="17">
    <location>
        <begin position="129"/>
        <end position="137"/>
    </location>
</feature>
<feature type="helix" evidence="17">
    <location>
        <begin position="139"/>
        <end position="143"/>
    </location>
</feature>
<feature type="strand" evidence="17">
    <location>
        <begin position="144"/>
        <end position="146"/>
    </location>
</feature>
<feature type="helix" evidence="17">
    <location>
        <begin position="147"/>
        <end position="150"/>
    </location>
</feature>
<feature type="turn" evidence="17">
    <location>
        <begin position="151"/>
        <end position="153"/>
    </location>
</feature>
<feature type="helix" evidence="17">
    <location>
        <begin position="160"/>
        <end position="163"/>
    </location>
</feature>
<feature type="helix" evidence="17">
    <location>
        <begin position="169"/>
        <end position="172"/>
    </location>
</feature>
<feature type="helix" evidence="17">
    <location>
        <begin position="183"/>
        <end position="191"/>
    </location>
</feature>
<feature type="helix" evidence="17">
    <location>
        <begin position="196"/>
        <end position="198"/>
    </location>
</feature>
<feature type="helix" evidence="17">
    <location>
        <begin position="201"/>
        <end position="209"/>
    </location>
</feature>
<feature type="turn" evidence="17">
    <location>
        <begin position="210"/>
        <end position="212"/>
    </location>
</feature>
<feature type="strand" evidence="17">
    <location>
        <begin position="217"/>
        <end position="219"/>
    </location>
</feature>
<feature type="turn" evidence="17">
    <location>
        <begin position="220"/>
        <end position="223"/>
    </location>
</feature>
<feature type="strand" evidence="17">
    <location>
        <begin position="224"/>
        <end position="226"/>
    </location>
</feature>
<feature type="helix" evidence="17">
    <location>
        <begin position="235"/>
        <end position="244"/>
    </location>
</feature>
<feature type="strand" evidence="17">
    <location>
        <begin position="249"/>
        <end position="251"/>
    </location>
</feature>
<feature type="turn" evidence="17">
    <location>
        <begin position="253"/>
        <end position="255"/>
    </location>
</feature>
<feature type="helix" evidence="17">
    <location>
        <begin position="266"/>
        <end position="272"/>
    </location>
</feature>
<feature type="helix" evidence="17">
    <location>
        <begin position="274"/>
        <end position="277"/>
    </location>
</feature>
<feature type="helix" evidence="17">
    <location>
        <begin position="282"/>
        <end position="286"/>
    </location>
</feature>
<feature type="strand" evidence="17">
    <location>
        <begin position="289"/>
        <end position="291"/>
    </location>
</feature>
<feature type="strand" evidence="17">
    <location>
        <begin position="297"/>
        <end position="299"/>
    </location>
</feature>
<feature type="helix" evidence="17">
    <location>
        <begin position="306"/>
        <end position="312"/>
    </location>
</feature>
<feature type="helix" evidence="17">
    <location>
        <begin position="314"/>
        <end position="316"/>
    </location>
</feature>
<feature type="helix" evidence="17">
    <location>
        <begin position="322"/>
        <end position="359"/>
    </location>
</feature>
<feature type="helix" evidence="17">
    <location>
        <begin position="364"/>
        <end position="385"/>
    </location>
</feature>
<feature type="helix" evidence="17">
    <location>
        <begin position="390"/>
        <end position="393"/>
    </location>
</feature>
<feature type="helix" evidence="17">
    <location>
        <begin position="395"/>
        <end position="422"/>
    </location>
</feature>
<feature type="helix" evidence="17">
    <location>
        <begin position="437"/>
        <end position="443"/>
    </location>
</feature>
<feature type="helix" evidence="17">
    <location>
        <begin position="448"/>
        <end position="472"/>
    </location>
</feature>